<reference key="1">
    <citation type="journal article" date="2000" name="Nature">
        <title>Sequence and analysis of chromosome 1 of the plant Arabidopsis thaliana.</title>
        <authorList>
            <person name="Theologis A."/>
            <person name="Ecker J.R."/>
            <person name="Palm C.J."/>
            <person name="Federspiel N.A."/>
            <person name="Kaul S."/>
            <person name="White O."/>
            <person name="Alonso J."/>
            <person name="Altafi H."/>
            <person name="Araujo R."/>
            <person name="Bowman C.L."/>
            <person name="Brooks S.Y."/>
            <person name="Buehler E."/>
            <person name="Chan A."/>
            <person name="Chao Q."/>
            <person name="Chen H."/>
            <person name="Cheuk R.F."/>
            <person name="Chin C.W."/>
            <person name="Chung M.K."/>
            <person name="Conn L."/>
            <person name="Conway A.B."/>
            <person name="Conway A.R."/>
            <person name="Creasy T.H."/>
            <person name="Dewar K."/>
            <person name="Dunn P."/>
            <person name="Etgu P."/>
            <person name="Feldblyum T.V."/>
            <person name="Feng J.-D."/>
            <person name="Fong B."/>
            <person name="Fujii C.Y."/>
            <person name="Gill J.E."/>
            <person name="Goldsmith A.D."/>
            <person name="Haas B."/>
            <person name="Hansen N.F."/>
            <person name="Hughes B."/>
            <person name="Huizar L."/>
            <person name="Hunter J.L."/>
            <person name="Jenkins J."/>
            <person name="Johnson-Hopson C."/>
            <person name="Khan S."/>
            <person name="Khaykin E."/>
            <person name="Kim C.J."/>
            <person name="Koo H.L."/>
            <person name="Kremenetskaia I."/>
            <person name="Kurtz D.B."/>
            <person name="Kwan A."/>
            <person name="Lam B."/>
            <person name="Langin-Hooper S."/>
            <person name="Lee A."/>
            <person name="Lee J.M."/>
            <person name="Lenz C.A."/>
            <person name="Li J.H."/>
            <person name="Li Y.-P."/>
            <person name="Lin X."/>
            <person name="Liu S.X."/>
            <person name="Liu Z.A."/>
            <person name="Luros J.S."/>
            <person name="Maiti R."/>
            <person name="Marziali A."/>
            <person name="Militscher J."/>
            <person name="Miranda M."/>
            <person name="Nguyen M."/>
            <person name="Nierman W.C."/>
            <person name="Osborne B.I."/>
            <person name="Pai G."/>
            <person name="Peterson J."/>
            <person name="Pham P.K."/>
            <person name="Rizzo M."/>
            <person name="Rooney T."/>
            <person name="Rowley D."/>
            <person name="Sakano H."/>
            <person name="Salzberg S.L."/>
            <person name="Schwartz J.R."/>
            <person name="Shinn P."/>
            <person name="Southwick A.M."/>
            <person name="Sun H."/>
            <person name="Tallon L.J."/>
            <person name="Tambunga G."/>
            <person name="Toriumi M.J."/>
            <person name="Town C.D."/>
            <person name="Utterback T."/>
            <person name="Van Aken S."/>
            <person name="Vaysberg M."/>
            <person name="Vysotskaia V.S."/>
            <person name="Walker M."/>
            <person name="Wu D."/>
            <person name="Yu G."/>
            <person name="Fraser C.M."/>
            <person name="Venter J.C."/>
            <person name="Davis R.W."/>
        </authorList>
    </citation>
    <scope>NUCLEOTIDE SEQUENCE [LARGE SCALE GENOMIC DNA]</scope>
    <source>
        <strain>cv. Columbia</strain>
    </source>
</reference>
<reference key="2">
    <citation type="journal article" date="2017" name="Plant J.">
        <title>Araport11: a complete reannotation of the Arabidopsis thaliana reference genome.</title>
        <authorList>
            <person name="Cheng C.Y."/>
            <person name="Krishnakumar V."/>
            <person name="Chan A.P."/>
            <person name="Thibaud-Nissen F."/>
            <person name="Schobel S."/>
            <person name="Town C.D."/>
        </authorList>
    </citation>
    <scope>GENOME REANNOTATION</scope>
    <source>
        <strain>cv. Columbia</strain>
    </source>
</reference>
<reference key="3">
    <citation type="submission" date="2006-07" db="EMBL/GenBank/DDBJ databases">
        <title>Large-scale analysis of RIKEN Arabidopsis full-length (RAFL) cDNAs.</title>
        <authorList>
            <person name="Totoki Y."/>
            <person name="Seki M."/>
            <person name="Ishida J."/>
            <person name="Nakajima M."/>
            <person name="Enju A."/>
            <person name="Kamiya A."/>
            <person name="Narusaka M."/>
            <person name="Shin-i T."/>
            <person name="Nakagawa M."/>
            <person name="Sakamoto N."/>
            <person name="Oishi K."/>
            <person name="Kohara Y."/>
            <person name="Kobayashi M."/>
            <person name="Toyoda A."/>
            <person name="Sakaki Y."/>
            <person name="Sakurai T."/>
            <person name="Iida K."/>
            <person name="Akiyama K."/>
            <person name="Satou M."/>
            <person name="Toyoda T."/>
            <person name="Konagaya A."/>
            <person name="Carninci P."/>
            <person name="Kawai J."/>
            <person name="Hayashizaki Y."/>
            <person name="Shinozaki K."/>
        </authorList>
    </citation>
    <scope>NUCLEOTIDE SEQUENCE [LARGE SCALE MRNA]</scope>
    <source>
        <strain>cv. Columbia</strain>
    </source>
</reference>
<reference key="4">
    <citation type="journal article" date="2001" name="Plant J.">
        <title>Regulation of drought tolerance by gene manipulation of 9-cis-epoxycarotenoid dioxygenase, a key enzyme in abscisic acid biosynthesis in Arabidopsis.</title>
        <authorList>
            <person name="Iuchi S."/>
            <person name="Kobayashi M."/>
            <person name="Taji T."/>
            <person name="Naramoto M."/>
            <person name="Seki M."/>
            <person name="Kato T."/>
            <person name="Tabata S."/>
            <person name="Kakubari Y."/>
            <person name="Yamaguchi-Shinozaki K."/>
            <person name="Shinozaki K."/>
        </authorList>
    </citation>
    <scope>INDUCTION BY DROUGHT STRESS</scope>
</reference>
<reference key="5">
    <citation type="journal article" date="2003" name="Plant J.">
        <title>Molecular characterization of the Arabidopsis 9-cis epoxycarotenoid dioxygenase gene family.</title>
        <authorList>
            <person name="Tan B.-C."/>
            <person name="Joseph L.M."/>
            <person name="Deng W.-T."/>
            <person name="Liu L."/>
            <person name="Li Q.-B."/>
            <person name="Cline K."/>
            <person name="McCarty D.R."/>
        </authorList>
    </citation>
    <scope>SUBCELLULAR LOCATION</scope>
    <scope>TISSUE SPECIFICITY</scope>
    <scope>INDUCTION BY DROUGHT STRESS</scope>
</reference>
<reference key="6">
    <citation type="journal article" date="2004" name="J. Cell Sci.">
        <title>Arabidopsis VARIEGATED 3 encodes a chloroplast-targeted, zinc-finger protein required for chloroplast and palisade cell development.</title>
        <authorList>
            <person name="Naested H."/>
            <person name="Holm A."/>
            <person name="Jenkins T."/>
            <person name="Nielsen H.B."/>
            <person name="Harris C.A."/>
            <person name="Beale M.H."/>
            <person name="Andersen M."/>
            <person name="Mant A."/>
            <person name="Scheller H."/>
            <person name="Camara B."/>
            <person name="Mattsson O."/>
            <person name="Mundy J."/>
        </authorList>
    </citation>
    <scope>SUBCELLULAR LOCATION</scope>
    <scope>INTERACTION WITH VAR3</scope>
</reference>
<reference key="7">
    <citation type="journal article" date="2006" name="Plant J.">
        <title>Functional analysis of Arabidopsis NCED6 and NCED9 genes indicates that ABA synthesized in the endosperm is involved in the induction of seed dormancy.</title>
        <authorList>
            <person name="Lefebvre V."/>
            <person name="North H."/>
            <person name="Frey A."/>
            <person name="Sotta B."/>
            <person name="Seo M."/>
            <person name="Okamoto M."/>
            <person name="Nambara E."/>
            <person name="Marion-Poll A."/>
        </authorList>
    </citation>
    <scope>DEVELOPMENTAL STAGE</scope>
    <scope>TISSUE SPECIFICITY</scope>
</reference>
<dbReference type="EC" id="1.13.11.51"/>
<dbReference type="EMBL" id="AC074176">
    <property type="protein sequence ID" value="AAG50855.1"/>
    <property type="molecule type" value="Genomic_DNA"/>
</dbReference>
<dbReference type="EMBL" id="CP002684">
    <property type="protein sequence ID" value="AEE31178.1"/>
    <property type="molecule type" value="Genomic_DNA"/>
</dbReference>
<dbReference type="EMBL" id="AK226774">
    <property type="protein sequence ID" value="BAE98872.1"/>
    <property type="molecule type" value="mRNA"/>
</dbReference>
<dbReference type="PIR" id="A86425">
    <property type="entry name" value="A86425"/>
</dbReference>
<dbReference type="RefSeq" id="NP_174302.1">
    <property type="nucleotide sequence ID" value="NM_102749.3"/>
</dbReference>
<dbReference type="SMR" id="Q9C6Z1"/>
<dbReference type="FunCoup" id="Q9C6Z1">
    <property type="interactions" value="28"/>
</dbReference>
<dbReference type="IntAct" id="Q9C6Z1">
    <property type="interactions" value="1"/>
</dbReference>
<dbReference type="STRING" id="3702.Q9C6Z1"/>
<dbReference type="PaxDb" id="3702-AT1G30100.1"/>
<dbReference type="EnsemblPlants" id="AT1G30100.1">
    <property type="protein sequence ID" value="AT1G30100.1"/>
    <property type="gene ID" value="AT1G30100"/>
</dbReference>
<dbReference type="GeneID" id="839889"/>
<dbReference type="Gramene" id="AT1G30100.1">
    <property type="protein sequence ID" value="AT1G30100.1"/>
    <property type="gene ID" value="AT1G30100"/>
</dbReference>
<dbReference type="KEGG" id="ath:AT1G30100"/>
<dbReference type="Araport" id="AT1G30100"/>
<dbReference type="TAIR" id="AT1G30100">
    <property type="gene designation" value="NCED5"/>
</dbReference>
<dbReference type="eggNOG" id="KOG1285">
    <property type="taxonomic scope" value="Eukaryota"/>
</dbReference>
<dbReference type="HOGENOM" id="CLU_016472_0_0_1"/>
<dbReference type="InParanoid" id="Q9C6Z1"/>
<dbReference type="OMA" id="YAIVPDQ"/>
<dbReference type="OrthoDB" id="1069523at2759"/>
<dbReference type="PhylomeDB" id="Q9C6Z1"/>
<dbReference type="BioCyc" id="ARA:AT1G30100-MONOMER"/>
<dbReference type="BRENDA" id="1.13.11.51">
    <property type="organism ID" value="399"/>
</dbReference>
<dbReference type="PRO" id="PR:Q9C6Z1"/>
<dbReference type="Proteomes" id="UP000006548">
    <property type="component" value="Chromosome 1"/>
</dbReference>
<dbReference type="ExpressionAtlas" id="Q9C6Z1">
    <property type="expression patterns" value="baseline and differential"/>
</dbReference>
<dbReference type="GO" id="GO:0009535">
    <property type="term" value="C:chloroplast thylakoid membrane"/>
    <property type="evidence" value="ECO:0007669"/>
    <property type="project" value="UniProtKB-SubCell"/>
</dbReference>
<dbReference type="GO" id="GO:0009579">
    <property type="term" value="C:thylakoid"/>
    <property type="evidence" value="ECO:0000314"/>
    <property type="project" value="TAIR"/>
</dbReference>
<dbReference type="GO" id="GO:0045549">
    <property type="term" value="F:9-cis-epoxycarotenoid dioxygenase activity"/>
    <property type="evidence" value="ECO:0000304"/>
    <property type="project" value="TAIR"/>
</dbReference>
<dbReference type="GO" id="GO:0046872">
    <property type="term" value="F:metal ion binding"/>
    <property type="evidence" value="ECO:0007669"/>
    <property type="project" value="UniProtKB-KW"/>
</dbReference>
<dbReference type="GO" id="GO:0009688">
    <property type="term" value="P:abscisic acid biosynthetic process"/>
    <property type="evidence" value="ECO:0000315"/>
    <property type="project" value="TAIR"/>
</dbReference>
<dbReference type="GO" id="GO:0009414">
    <property type="term" value="P:response to water deprivation"/>
    <property type="evidence" value="ECO:0000316"/>
    <property type="project" value="TAIR"/>
</dbReference>
<dbReference type="GO" id="GO:0010162">
    <property type="term" value="P:seed dormancy process"/>
    <property type="evidence" value="ECO:0000316"/>
    <property type="project" value="TAIR"/>
</dbReference>
<dbReference type="InterPro" id="IPR004294">
    <property type="entry name" value="Carotenoid_Oase"/>
</dbReference>
<dbReference type="PANTHER" id="PTHR10543:SF123">
    <property type="entry name" value="9-CIS-EPOXYCAROTENOID DIOXYGENASE NCED5, CHLOROPLASTIC-RELATED"/>
    <property type="match status" value="1"/>
</dbReference>
<dbReference type="PANTHER" id="PTHR10543">
    <property type="entry name" value="BETA-CAROTENE DIOXYGENASE"/>
    <property type="match status" value="1"/>
</dbReference>
<dbReference type="Pfam" id="PF03055">
    <property type="entry name" value="RPE65"/>
    <property type="match status" value="1"/>
</dbReference>
<sequence length="589" mass="65337">MACSYILTPNPTKLNLSFAPSDLDAPSPSSSVSFTNTKPRRRKLSANSVSDTPNLLNFPNYPSPNPIIPEKDTSRWNPLQRAASAALDFAETALLRRERSKPLPKTVDPRHQISGNYAPVPEQSVKSSLSVDGKIPDCIDGVYLRNGANPLFEPVSGHHLFDGDGMVHAVKITNGDASYSCRFTETERLVQEKQLGSPIFPKAIGELHGHSGIARLMLFYARGLFGLLNHKNGTGVANAGLVYFHDRLLAMSEDDLPYQVRVTDNGDLETIGRFDFDGQLSSAMIAHPKIDPVTKELFALSYDVVKKPYLKYFKFSPEGEKSPDVEIPLASPTMMHDFAITENFVVIPDQQVVFKLSDMFLGKSPVKYDGEKISRFGILPRNAKDASEMVWVESPETFCFHLWNAWESPETDEVVVIGSCMTPADSIFNECDEQLNSVLSEIRLNLKTGKSTRRTIIPGSVQMNLEAGMVNRNLLGRKTRYAYLAIAEPWPKVSGFAKVDLSTGEVKNHFYGGKKYGGEPFFLPRGLESDGEDDGYIMSFVHDEESWESELHIVNAVTLELEATVKLPSRVPYGFHGTFVNSADMLNQA</sequence>
<accession>Q9C6Z1</accession>
<evidence type="ECO:0000250" key="1"/>
<evidence type="ECO:0000250" key="2">
    <source>
        <dbReference type="UniProtKB" id="O24592"/>
    </source>
</evidence>
<evidence type="ECO:0000255" key="3"/>
<evidence type="ECO:0000256" key="4">
    <source>
        <dbReference type="SAM" id="MobiDB-lite"/>
    </source>
</evidence>
<evidence type="ECO:0000269" key="5">
    <source>
    </source>
</evidence>
<evidence type="ECO:0000269" key="6">
    <source>
    </source>
</evidence>
<evidence type="ECO:0000269" key="7">
    <source>
    </source>
</evidence>
<evidence type="ECO:0000269" key="8">
    <source>
    </source>
</evidence>
<evidence type="ECO:0000305" key="9"/>
<keyword id="KW-0937">Abscisic acid biosynthesis</keyword>
<keyword id="KW-0150">Chloroplast</keyword>
<keyword id="KW-0223">Dioxygenase</keyword>
<keyword id="KW-0408">Iron</keyword>
<keyword id="KW-0472">Membrane</keyword>
<keyword id="KW-0479">Metal-binding</keyword>
<keyword id="KW-0560">Oxidoreductase</keyword>
<keyword id="KW-0934">Plastid</keyword>
<keyword id="KW-1185">Reference proteome</keyword>
<keyword id="KW-0793">Thylakoid</keyword>
<keyword id="KW-0809">Transit peptide</keyword>
<feature type="transit peptide" description="Chloroplast" evidence="3">
    <location>
        <begin position="1"/>
        <end position="45"/>
    </location>
</feature>
<feature type="chain" id="PRO_0000285994" description="Probable 9-cis-epoxycarotenoid dioxygenase NCED5, chloroplastic">
    <location>
        <begin position="46"/>
        <end position="589"/>
    </location>
</feature>
<feature type="region of interest" description="Disordered" evidence="4">
    <location>
        <begin position="21"/>
        <end position="51"/>
    </location>
</feature>
<feature type="compositionally biased region" description="Low complexity" evidence="4">
    <location>
        <begin position="21"/>
        <end position="34"/>
    </location>
</feature>
<feature type="binding site" evidence="2">
    <location>
        <position position="287"/>
    </location>
    <ligand>
        <name>Fe cation</name>
        <dbReference type="ChEBI" id="CHEBI:24875"/>
    </ligand>
</feature>
<feature type="binding site" evidence="2">
    <location>
        <position position="336"/>
    </location>
    <ligand>
        <name>Fe cation</name>
        <dbReference type="ChEBI" id="CHEBI:24875"/>
    </ligand>
</feature>
<feature type="binding site" evidence="2">
    <location>
        <position position="401"/>
    </location>
    <ligand>
        <name>Fe cation</name>
        <dbReference type="ChEBI" id="CHEBI:24875"/>
    </ligand>
</feature>
<feature type="binding site" evidence="2">
    <location>
        <position position="576"/>
    </location>
    <ligand>
        <name>Fe cation</name>
        <dbReference type="ChEBI" id="CHEBI:24875"/>
    </ligand>
</feature>
<comment type="function">
    <text evidence="1">Has a 11,12(11',12') 9-cis epoxycarotenoid cleavage activity. Catalyzes the first step of abscisic-acid biosynthesis from carotenoids (By similarity).</text>
</comment>
<comment type="catalytic activity">
    <reaction>
        <text>a 9-cis-epoxycarotenoid + O2 = a 12'-apo-carotenal + 2-cis,4-trans-xanthoxin</text>
        <dbReference type="Rhea" id="RHEA:23328"/>
        <dbReference type="ChEBI" id="CHEBI:15379"/>
        <dbReference type="ChEBI" id="CHEBI:32304"/>
        <dbReference type="ChEBI" id="CHEBI:51972"/>
        <dbReference type="ChEBI" id="CHEBI:51973"/>
        <dbReference type="EC" id="1.13.11.51"/>
    </reaction>
</comment>
<comment type="catalytic activity">
    <reaction>
        <text>9-cis-violaxanthin + O2 = (3S,5R,6S)-5,6-epoxy-3-hydroxy-5,6-dihydro-12'-apo-beta-caroten-12'-al + 2-cis,4-trans-xanthoxin</text>
        <dbReference type="Rhea" id="RHEA:16541"/>
        <dbReference type="ChEBI" id="CHEBI:15379"/>
        <dbReference type="ChEBI" id="CHEBI:32304"/>
        <dbReference type="ChEBI" id="CHEBI:34597"/>
        <dbReference type="ChEBI" id="CHEBI:35305"/>
        <dbReference type="EC" id="1.13.11.51"/>
    </reaction>
</comment>
<comment type="catalytic activity">
    <reaction>
        <text>9'-cis-neoxanthin + O2 = (3S,5R,6R)-3,5-dihydroxy-6,7-didehydro-5,6-dihydro-12'-apo-beta-caroten-12'-al + 2-cis,4-trans-xanthoxin</text>
        <dbReference type="Rhea" id="RHEA:19677"/>
        <dbReference type="ChEBI" id="CHEBI:15379"/>
        <dbReference type="ChEBI" id="CHEBI:32304"/>
        <dbReference type="ChEBI" id="CHEBI:34596"/>
        <dbReference type="ChEBI" id="CHEBI:35306"/>
        <dbReference type="EC" id="1.13.11.51"/>
    </reaction>
</comment>
<comment type="cofactor">
    <cofactor evidence="2">
        <name>Fe(2+)</name>
        <dbReference type="ChEBI" id="CHEBI:29033"/>
    </cofactor>
    <text evidence="2">Binds 1 Fe(2+) ion per subunit.</text>
</comment>
<comment type="subunit">
    <text evidence="7">Interacts in vitro with VAR3.</text>
</comment>
<comment type="subcellular location">
    <subcellularLocation>
        <location evidence="6 7">Plastid</location>
        <location evidence="6 7">Chloroplast thylakoid membrane</location>
    </subcellularLocation>
</comment>
<comment type="tissue specificity">
    <text evidence="6 8">Detected only in seeds.</text>
</comment>
<comment type="developmental stage">
    <text evidence="8">Expressed at later stages of seed maturation.</text>
</comment>
<comment type="induction">
    <text evidence="5 6">Low induction by drought stress.</text>
</comment>
<comment type="similarity">
    <text evidence="9">Belongs to the carotenoid oxygenase family.</text>
</comment>
<protein>
    <recommendedName>
        <fullName>Probable 9-cis-epoxycarotenoid dioxygenase NCED5, chloroplastic</fullName>
        <shortName>AtNCED5</shortName>
        <ecNumber>1.13.11.51</ecNumber>
    </recommendedName>
</protein>
<proteinExistence type="evidence at protein level"/>
<organism>
    <name type="scientific">Arabidopsis thaliana</name>
    <name type="common">Mouse-ear cress</name>
    <dbReference type="NCBI Taxonomy" id="3702"/>
    <lineage>
        <taxon>Eukaryota</taxon>
        <taxon>Viridiplantae</taxon>
        <taxon>Streptophyta</taxon>
        <taxon>Embryophyta</taxon>
        <taxon>Tracheophyta</taxon>
        <taxon>Spermatophyta</taxon>
        <taxon>Magnoliopsida</taxon>
        <taxon>eudicotyledons</taxon>
        <taxon>Gunneridae</taxon>
        <taxon>Pentapetalae</taxon>
        <taxon>rosids</taxon>
        <taxon>malvids</taxon>
        <taxon>Brassicales</taxon>
        <taxon>Brassicaceae</taxon>
        <taxon>Camelineae</taxon>
        <taxon>Arabidopsis</taxon>
    </lineage>
</organism>
<name>NCED5_ARATH</name>
<gene>
    <name type="primary">NCED5</name>
    <name type="ordered locus">At1g30100</name>
    <name type="ORF">T2H7.10</name>
</gene>